<feature type="chain" id="PRO_0000227068" description="Protein SlyX homolog">
    <location>
        <begin position="1"/>
        <end position="84"/>
    </location>
</feature>
<reference key="1">
    <citation type="journal article" date="2004" name="Nat. Biotechnol.">
        <title>The genome sequence of the capnophilic rumen bacterium Mannheimia succiniciproducens.</title>
        <authorList>
            <person name="Hong S.H."/>
            <person name="Kim J.S."/>
            <person name="Lee S.Y."/>
            <person name="In Y.H."/>
            <person name="Choi S.S."/>
            <person name="Rih J.-K."/>
            <person name="Kim C.H."/>
            <person name="Jeong H."/>
            <person name="Hur C.G."/>
            <person name="Kim J.J."/>
        </authorList>
    </citation>
    <scope>NUCLEOTIDE SEQUENCE [LARGE SCALE GENOMIC DNA]</scope>
    <source>
        <strain>KCTC 0769BP / MBEL55E</strain>
    </source>
</reference>
<name>SLYX_MANSM</name>
<accession>Q65W97</accession>
<protein>
    <recommendedName>
        <fullName evidence="1">Protein SlyX homolog</fullName>
    </recommendedName>
</protein>
<proteinExistence type="inferred from homology"/>
<gene>
    <name evidence="1" type="primary">slyX</name>
    <name type="ordered locus">MS0156</name>
</gene>
<sequence>MAIVQHLFGITMQNSANLEQRIAELEMKITFQEGIIEELNQALIEQQFVIDKMQLQMRHVANKLKDLQPANIATQAEETPPPHY</sequence>
<comment type="similarity">
    <text evidence="1">Belongs to the SlyX family.</text>
</comment>
<organism>
    <name type="scientific">Mannheimia succiniciproducens (strain KCTC 0769BP / MBEL55E)</name>
    <dbReference type="NCBI Taxonomy" id="221988"/>
    <lineage>
        <taxon>Bacteria</taxon>
        <taxon>Pseudomonadati</taxon>
        <taxon>Pseudomonadota</taxon>
        <taxon>Gammaproteobacteria</taxon>
        <taxon>Pasteurellales</taxon>
        <taxon>Pasteurellaceae</taxon>
        <taxon>Basfia</taxon>
    </lineage>
</organism>
<evidence type="ECO:0000255" key="1">
    <source>
        <dbReference type="HAMAP-Rule" id="MF_00715"/>
    </source>
</evidence>
<dbReference type="EMBL" id="AE016827">
    <property type="protein sequence ID" value="AAU36763.1"/>
    <property type="molecule type" value="Genomic_DNA"/>
</dbReference>
<dbReference type="SMR" id="Q65W97"/>
<dbReference type="STRING" id="221988.MS0156"/>
<dbReference type="KEGG" id="msu:MS0156"/>
<dbReference type="eggNOG" id="COG2900">
    <property type="taxonomic scope" value="Bacteria"/>
</dbReference>
<dbReference type="HOGENOM" id="CLU_180796_4_0_6"/>
<dbReference type="Proteomes" id="UP000000607">
    <property type="component" value="Chromosome"/>
</dbReference>
<dbReference type="Gene3D" id="1.20.5.300">
    <property type="match status" value="1"/>
</dbReference>
<dbReference type="HAMAP" id="MF_00715">
    <property type="entry name" value="SlyX"/>
    <property type="match status" value="1"/>
</dbReference>
<dbReference type="InterPro" id="IPR007236">
    <property type="entry name" value="SlyX"/>
</dbReference>
<dbReference type="NCBIfam" id="NF002556">
    <property type="entry name" value="PRK02119.1"/>
    <property type="match status" value="1"/>
</dbReference>
<dbReference type="PANTHER" id="PTHR36508">
    <property type="entry name" value="PROTEIN SLYX"/>
    <property type="match status" value="1"/>
</dbReference>
<dbReference type="PANTHER" id="PTHR36508:SF1">
    <property type="entry name" value="PROTEIN SLYX"/>
    <property type="match status" value="1"/>
</dbReference>
<dbReference type="Pfam" id="PF04102">
    <property type="entry name" value="SlyX"/>
    <property type="match status" value="1"/>
</dbReference>